<evidence type="ECO:0000255" key="1">
    <source>
        <dbReference type="HAMAP-Rule" id="MF_00124"/>
    </source>
</evidence>
<sequence>MYRKYSDGIIEVITGPMYSGKSEELIKRIKILQFANIKTLIVKQKFDTRFSHNEIVSRSGTKLNTIVASNVEEIKKVWNNTYKAIAIDEVQFFDKDIINYIDELASKGIRVIISGLDTDFARKPFGIMPELLAIADDVLKLKAVCFSCKNAGTHTFRITNDKDQKLLGDTESYQARCRKCHLEGEEQKIQMDNLKLNLSL</sequence>
<name>KITH_MYCM1</name>
<proteinExistence type="inferred from homology"/>
<comment type="catalytic activity">
    <reaction evidence="1">
        <text>thymidine + ATP = dTMP + ADP + H(+)</text>
        <dbReference type="Rhea" id="RHEA:19129"/>
        <dbReference type="ChEBI" id="CHEBI:15378"/>
        <dbReference type="ChEBI" id="CHEBI:17748"/>
        <dbReference type="ChEBI" id="CHEBI:30616"/>
        <dbReference type="ChEBI" id="CHEBI:63528"/>
        <dbReference type="ChEBI" id="CHEBI:456216"/>
        <dbReference type="EC" id="2.7.1.21"/>
    </reaction>
</comment>
<comment type="subunit">
    <text evidence="1">Homotetramer.</text>
</comment>
<comment type="subcellular location">
    <subcellularLocation>
        <location evidence="1">Cytoplasm</location>
    </subcellularLocation>
</comment>
<comment type="similarity">
    <text evidence="1">Belongs to the thymidine kinase family.</text>
</comment>
<gene>
    <name evidence="1" type="primary">tdk</name>
    <name type="ordered locus">MMOB6150</name>
</gene>
<keyword id="KW-0067">ATP-binding</keyword>
<keyword id="KW-0963">Cytoplasm</keyword>
<keyword id="KW-0237">DNA synthesis</keyword>
<keyword id="KW-0418">Kinase</keyword>
<keyword id="KW-0479">Metal-binding</keyword>
<keyword id="KW-0547">Nucleotide-binding</keyword>
<keyword id="KW-1185">Reference proteome</keyword>
<keyword id="KW-0808">Transferase</keyword>
<keyword id="KW-0862">Zinc</keyword>
<organism>
    <name type="scientific">Mycoplasma mobile (strain ATCC 43663 / 163K / NCTC 11711)</name>
    <name type="common">Mesomycoplasma mobile</name>
    <dbReference type="NCBI Taxonomy" id="267748"/>
    <lineage>
        <taxon>Bacteria</taxon>
        <taxon>Bacillati</taxon>
        <taxon>Mycoplasmatota</taxon>
        <taxon>Mycoplasmoidales</taxon>
        <taxon>Metamycoplasmataceae</taxon>
        <taxon>Mesomycoplasma</taxon>
    </lineage>
</organism>
<protein>
    <recommendedName>
        <fullName evidence="1">Thymidine kinase</fullName>
        <ecNumber evidence="1">2.7.1.21</ecNumber>
    </recommendedName>
</protein>
<reference key="1">
    <citation type="journal article" date="2004" name="Genome Res.">
        <title>The complete genome and proteome of Mycoplasma mobile.</title>
        <authorList>
            <person name="Jaffe J.D."/>
            <person name="Stange-Thomann N."/>
            <person name="Smith C."/>
            <person name="DeCaprio D."/>
            <person name="Fisher S."/>
            <person name="Butler J."/>
            <person name="Calvo S."/>
            <person name="Elkins T."/>
            <person name="FitzGerald M.G."/>
            <person name="Hafez N."/>
            <person name="Kodira C.D."/>
            <person name="Major J."/>
            <person name="Wang S."/>
            <person name="Wilkinson J."/>
            <person name="Nicol R."/>
            <person name="Nusbaum C."/>
            <person name="Birren B."/>
            <person name="Berg H.C."/>
            <person name="Church G.M."/>
        </authorList>
    </citation>
    <scope>NUCLEOTIDE SEQUENCE [LARGE SCALE GENOMIC DNA]</scope>
    <source>
        <strain>ATCC 43663 / NCTC 11711 / 163 K</strain>
    </source>
</reference>
<feature type="chain" id="PRO_0000174996" description="Thymidine kinase">
    <location>
        <begin position="1"/>
        <end position="200"/>
    </location>
</feature>
<feature type="active site" description="Proton acceptor" evidence="1">
    <location>
        <position position="89"/>
    </location>
</feature>
<feature type="binding site" evidence="1">
    <location>
        <begin position="15"/>
        <end position="22"/>
    </location>
    <ligand>
        <name>ATP</name>
        <dbReference type="ChEBI" id="CHEBI:30616"/>
    </ligand>
</feature>
<feature type="binding site" evidence="1">
    <location>
        <begin position="88"/>
        <end position="91"/>
    </location>
    <ligand>
        <name>ATP</name>
        <dbReference type="ChEBI" id="CHEBI:30616"/>
    </ligand>
</feature>
<feature type="binding site" evidence="1">
    <location>
        <position position="145"/>
    </location>
    <ligand>
        <name>Zn(2+)</name>
        <dbReference type="ChEBI" id="CHEBI:29105"/>
    </ligand>
</feature>
<feature type="binding site" evidence="1">
    <location>
        <position position="148"/>
    </location>
    <ligand>
        <name>Zn(2+)</name>
        <dbReference type="ChEBI" id="CHEBI:29105"/>
    </ligand>
</feature>
<feature type="binding site" evidence="1">
    <location>
        <position position="177"/>
    </location>
    <ligand>
        <name>Zn(2+)</name>
        <dbReference type="ChEBI" id="CHEBI:29105"/>
    </ligand>
</feature>
<feature type="binding site" evidence="1">
    <location>
        <position position="180"/>
    </location>
    <ligand>
        <name>Zn(2+)</name>
        <dbReference type="ChEBI" id="CHEBI:29105"/>
    </ligand>
</feature>
<accession>Q6KH30</accession>
<dbReference type="EC" id="2.7.1.21" evidence="1"/>
<dbReference type="EMBL" id="AE017308">
    <property type="protein sequence ID" value="AAT28101.1"/>
    <property type="molecule type" value="Genomic_DNA"/>
</dbReference>
<dbReference type="RefSeq" id="WP_011265135.1">
    <property type="nucleotide sequence ID" value="NC_006908.1"/>
</dbReference>
<dbReference type="SMR" id="Q6KH30"/>
<dbReference type="STRING" id="267748.MMOB6150"/>
<dbReference type="KEGG" id="mmo:MMOB6150"/>
<dbReference type="eggNOG" id="COG1435">
    <property type="taxonomic scope" value="Bacteria"/>
</dbReference>
<dbReference type="HOGENOM" id="CLU_064400_3_0_14"/>
<dbReference type="OrthoDB" id="9781579at2"/>
<dbReference type="Proteomes" id="UP000009072">
    <property type="component" value="Chromosome"/>
</dbReference>
<dbReference type="GO" id="GO:0005737">
    <property type="term" value="C:cytoplasm"/>
    <property type="evidence" value="ECO:0007669"/>
    <property type="project" value="UniProtKB-SubCell"/>
</dbReference>
<dbReference type="GO" id="GO:0005524">
    <property type="term" value="F:ATP binding"/>
    <property type="evidence" value="ECO:0007669"/>
    <property type="project" value="UniProtKB-UniRule"/>
</dbReference>
<dbReference type="GO" id="GO:0004797">
    <property type="term" value="F:thymidine kinase activity"/>
    <property type="evidence" value="ECO:0007669"/>
    <property type="project" value="UniProtKB-UniRule"/>
</dbReference>
<dbReference type="GO" id="GO:0008270">
    <property type="term" value="F:zinc ion binding"/>
    <property type="evidence" value="ECO:0007669"/>
    <property type="project" value="UniProtKB-UniRule"/>
</dbReference>
<dbReference type="GO" id="GO:0071897">
    <property type="term" value="P:DNA biosynthetic process"/>
    <property type="evidence" value="ECO:0007669"/>
    <property type="project" value="UniProtKB-KW"/>
</dbReference>
<dbReference type="GO" id="GO:0046104">
    <property type="term" value="P:thymidine metabolic process"/>
    <property type="evidence" value="ECO:0007669"/>
    <property type="project" value="TreeGrafter"/>
</dbReference>
<dbReference type="Gene3D" id="3.30.60.20">
    <property type="match status" value="1"/>
</dbReference>
<dbReference type="Gene3D" id="3.40.50.300">
    <property type="entry name" value="P-loop containing nucleotide triphosphate hydrolases"/>
    <property type="match status" value="1"/>
</dbReference>
<dbReference type="HAMAP" id="MF_00124">
    <property type="entry name" value="Thymidine_kinase"/>
    <property type="match status" value="1"/>
</dbReference>
<dbReference type="InterPro" id="IPR027417">
    <property type="entry name" value="P-loop_NTPase"/>
</dbReference>
<dbReference type="InterPro" id="IPR001267">
    <property type="entry name" value="Thymidine_kinase"/>
</dbReference>
<dbReference type="InterPro" id="IPR020633">
    <property type="entry name" value="Thymidine_kinase_CS"/>
</dbReference>
<dbReference type="NCBIfam" id="NF003296">
    <property type="entry name" value="PRK04296.1-1"/>
    <property type="match status" value="1"/>
</dbReference>
<dbReference type="PANTHER" id="PTHR11441">
    <property type="entry name" value="THYMIDINE KINASE"/>
    <property type="match status" value="1"/>
</dbReference>
<dbReference type="PANTHER" id="PTHR11441:SF0">
    <property type="entry name" value="THYMIDINE KINASE, CYTOSOLIC"/>
    <property type="match status" value="1"/>
</dbReference>
<dbReference type="Pfam" id="PF00265">
    <property type="entry name" value="TK"/>
    <property type="match status" value="1"/>
</dbReference>
<dbReference type="PIRSF" id="PIRSF035805">
    <property type="entry name" value="TK_cell"/>
    <property type="match status" value="1"/>
</dbReference>
<dbReference type="SUPFAM" id="SSF57716">
    <property type="entry name" value="Glucocorticoid receptor-like (DNA-binding domain)"/>
    <property type="match status" value="1"/>
</dbReference>
<dbReference type="SUPFAM" id="SSF52540">
    <property type="entry name" value="P-loop containing nucleoside triphosphate hydrolases"/>
    <property type="match status" value="1"/>
</dbReference>
<dbReference type="PROSITE" id="PS00603">
    <property type="entry name" value="TK_CELLULAR_TYPE"/>
    <property type="match status" value="1"/>
</dbReference>